<feature type="chain" id="PRO_0000150461" description="Putative olfactory receptor 2B3">
    <location>
        <begin position="1"/>
        <end position="313"/>
    </location>
</feature>
<feature type="topological domain" description="Extracellular" evidence="1">
    <location>
        <begin position="1"/>
        <end position="25"/>
    </location>
</feature>
<feature type="transmembrane region" description="Helical; Name=1" evidence="1">
    <location>
        <begin position="26"/>
        <end position="49"/>
    </location>
</feature>
<feature type="topological domain" description="Cytoplasmic" evidence="1">
    <location>
        <begin position="50"/>
        <end position="57"/>
    </location>
</feature>
<feature type="transmembrane region" description="Helical; Name=2" evidence="1">
    <location>
        <begin position="58"/>
        <end position="79"/>
    </location>
</feature>
<feature type="topological domain" description="Extracellular" evidence="1">
    <location>
        <begin position="80"/>
        <end position="100"/>
    </location>
</feature>
<feature type="transmembrane region" description="Helical; Name=3" evidence="1">
    <location>
        <begin position="101"/>
        <end position="120"/>
    </location>
</feature>
<feature type="topological domain" description="Cytoplasmic" evidence="1">
    <location>
        <begin position="121"/>
        <end position="139"/>
    </location>
</feature>
<feature type="transmembrane region" description="Helical; Name=4" evidence="1">
    <location>
        <begin position="140"/>
        <end position="158"/>
    </location>
</feature>
<feature type="topological domain" description="Extracellular" evidence="1">
    <location>
        <begin position="159"/>
        <end position="195"/>
    </location>
</feature>
<feature type="transmembrane region" description="Helical; Name=5" evidence="1">
    <location>
        <begin position="196"/>
        <end position="219"/>
    </location>
</feature>
<feature type="topological domain" description="Cytoplasmic" evidence="1">
    <location>
        <begin position="220"/>
        <end position="236"/>
    </location>
</feature>
<feature type="transmembrane region" description="Helical; Name=6" evidence="1">
    <location>
        <begin position="237"/>
        <end position="259"/>
    </location>
</feature>
<feature type="topological domain" description="Extracellular" evidence="1">
    <location>
        <begin position="260"/>
        <end position="272"/>
    </location>
</feature>
<feature type="transmembrane region" description="Helical; Name=7" evidence="1">
    <location>
        <begin position="273"/>
        <end position="292"/>
    </location>
</feature>
<feature type="topological domain" description="Cytoplasmic" evidence="1">
    <location>
        <begin position="293"/>
        <end position="313"/>
    </location>
</feature>
<feature type="glycosylation site" description="N-linked (GlcNAc...) asparagine" evidence="1">
    <location>
        <position position="5"/>
    </location>
</feature>
<feature type="disulfide bond" evidence="2">
    <location>
        <begin position="97"/>
        <end position="189"/>
    </location>
</feature>
<name>OR2B3_HUMAN</name>
<keyword id="KW-1003">Cell membrane</keyword>
<keyword id="KW-1015">Disulfide bond</keyword>
<keyword id="KW-0297">G-protein coupled receptor</keyword>
<keyword id="KW-0325">Glycoprotein</keyword>
<keyword id="KW-0472">Membrane</keyword>
<keyword id="KW-0552">Olfaction</keyword>
<keyword id="KW-0675">Receptor</keyword>
<keyword id="KW-1185">Reference proteome</keyword>
<keyword id="KW-0716">Sensory transduction</keyword>
<keyword id="KW-0807">Transducer</keyword>
<keyword id="KW-0812">Transmembrane</keyword>
<keyword id="KW-1133">Transmembrane helix</keyword>
<proteinExistence type="inferred from homology"/>
<dbReference type="EMBL" id="AJ302537">
    <property type="protein sequence ID" value="CAC20462.1"/>
    <property type="molecule type" value="Genomic_DNA"/>
</dbReference>
<dbReference type="EMBL" id="AJ302538">
    <property type="protein sequence ID" value="CAC20463.1"/>
    <property type="molecule type" value="Genomic_DNA"/>
</dbReference>
<dbReference type="EMBL" id="AJ302539">
    <property type="protein sequence ID" value="CAC20464.1"/>
    <property type="molecule type" value="Genomic_DNA"/>
</dbReference>
<dbReference type="EMBL" id="AJ302540">
    <property type="protein sequence ID" value="CAC20465.1"/>
    <property type="molecule type" value="Genomic_DNA"/>
</dbReference>
<dbReference type="EMBL" id="AJ302541">
    <property type="protein sequence ID" value="CAC20466.1"/>
    <property type="molecule type" value="Genomic_DNA"/>
</dbReference>
<dbReference type="EMBL" id="AJ302542">
    <property type="protein sequence ID" value="CAC20467.1"/>
    <property type="molecule type" value="Genomic_DNA"/>
</dbReference>
<dbReference type="EMBL" id="AJ302543">
    <property type="protein sequence ID" value="CAC20468.1"/>
    <property type="molecule type" value="Genomic_DNA"/>
</dbReference>
<dbReference type="EMBL" id="AJ302544">
    <property type="protein sequence ID" value="CAC20469.1"/>
    <property type="molecule type" value="Genomic_DNA"/>
</dbReference>
<dbReference type="EMBL" id="AJ302545">
    <property type="protein sequence ID" value="CAC20470.1"/>
    <property type="molecule type" value="Genomic_DNA"/>
</dbReference>
<dbReference type="EMBL" id="AJ302546">
    <property type="protein sequence ID" value="CAC20471.1"/>
    <property type="molecule type" value="Genomic_DNA"/>
</dbReference>
<dbReference type="EMBL" id="AL022727">
    <property type="protein sequence ID" value="CAA18782.1"/>
    <property type="molecule type" value="Genomic_DNA"/>
</dbReference>
<dbReference type="EMBL" id="AL662852">
    <property type="status" value="NOT_ANNOTATED_CDS"/>
    <property type="molecule type" value="Genomic_DNA"/>
</dbReference>
<dbReference type="EMBL" id="AL662791">
    <property type="status" value="NOT_ANNOTATED_CDS"/>
    <property type="molecule type" value="Genomic_DNA"/>
</dbReference>
<dbReference type="EMBL" id="AL929561">
    <property type="status" value="NOT_ANNOTATED_CDS"/>
    <property type="molecule type" value="Genomic_DNA"/>
</dbReference>
<dbReference type="EMBL" id="CR547123">
    <property type="status" value="NOT_ANNOTATED_CDS"/>
    <property type="molecule type" value="Genomic_DNA"/>
</dbReference>
<dbReference type="EMBL" id="CR942175">
    <property type="status" value="NOT_ANNOTATED_CDS"/>
    <property type="molecule type" value="Genomic_DNA"/>
</dbReference>
<dbReference type="EMBL" id="CR933783">
    <property type="status" value="NOT_ANNOTATED_CDS"/>
    <property type="molecule type" value="Genomic_DNA"/>
</dbReference>
<dbReference type="EMBL" id="CH471081">
    <property type="protein sequence ID" value="EAX03182.1"/>
    <property type="molecule type" value="Genomic_DNA"/>
</dbReference>
<dbReference type="EMBL" id="AF399632">
    <property type="protein sequence ID" value="AAK95117.1"/>
    <property type="molecule type" value="Genomic_DNA"/>
</dbReference>
<dbReference type="EMBL" id="BK004436">
    <property type="protein sequence ID" value="DAA04834.1"/>
    <property type="molecule type" value="Genomic_DNA"/>
</dbReference>
<dbReference type="CCDS" id="CCDS34358.1"/>
<dbReference type="RefSeq" id="NP_001005226.1">
    <property type="nucleotide sequence ID" value="NM_001005226.2"/>
</dbReference>
<dbReference type="SMR" id="O76000"/>
<dbReference type="BioGRID" id="138082">
    <property type="interactions" value="1"/>
</dbReference>
<dbReference type="FunCoup" id="O76000">
    <property type="interactions" value="449"/>
</dbReference>
<dbReference type="STRING" id="9606.ENSP00000366378"/>
<dbReference type="GlyCosmos" id="O76000">
    <property type="glycosylation" value="1 site, No reported glycans"/>
</dbReference>
<dbReference type="GlyGen" id="O76000">
    <property type="glycosylation" value="1 site"/>
</dbReference>
<dbReference type="iPTMnet" id="O76000"/>
<dbReference type="PhosphoSitePlus" id="O76000"/>
<dbReference type="BioMuta" id="OR2B3"/>
<dbReference type="PaxDb" id="9606-ENSP00000366378"/>
<dbReference type="PeptideAtlas" id="O76000"/>
<dbReference type="Antibodypedia" id="71075">
    <property type="antibodies" value="13 antibodies from 10 providers"/>
</dbReference>
<dbReference type="DNASU" id="442184"/>
<dbReference type="Ensembl" id="ENST00000377173.4">
    <property type="protein sequence ID" value="ENSP00000366378.2"/>
    <property type="gene ID" value="ENSG00000204703.5"/>
</dbReference>
<dbReference type="Ensembl" id="ENST00000383653.3">
    <property type="protein sequence ID" value="ENSP00000373149.3"/>
    <property type="gene ID" value="ENSG00000206524.3"/>
</dbReference>
<dbReference type="Ensembl" id="ENST00000415976.3">
    <property type="protein sequence ID" value="ENSP00000394571.2"/>
    <property type="gene ID" value="ENSG00000226832.3"/>
</dbReference>
<dbReference type="Ensembl" id="ENST00000419873.3">
    <property type="protein sequence ID" value="ENSP00000394593.2"/>
    <property type="gene ID" value="ENSG00000231319.3"/>
</dbReference>
<dbReference type="Ensembl" id="ENST00000420178.3">
    <property type="protein sequence ID" value="ENSP00000388604.2"/>
    <property type="gene ID" value="ENSG00000233054.3"/>
</dbReference>
<dbReference type="Ensembl" id="ENST00000444830.3">
    <property type="protein sequence ID" value="ENSP00000393235.2"/>
    <property type="gene ID" value="ENSG00000233180.3"/>
</dbReference>
<dbReference type="Ensembl" id="ENST00000450817.3">
    <property type="protein sequence ID" value="ENSP00000399881.2"/>
    <property type="gene ID" value="ENSG00000233687.3"/>
</dbReference>
<dbReference type="Ensembl" id="ENST00000456140.3">
    <property type="protein sequence ID" value="ENSP00000403571.2"/>
    <property type="gene ID" value="ENSG00000225736.3"/>
</dbReference>
<dbReference type="GeneID" id="442184"/>
<dbReference type="KEGG" id="hsa:442184"/>
<dbReference type="MANE-Select" id="ENST00000377173.4">
    <property type="protein sequence ID" value="ENSP00000366378.2"/>
    <property type="RefSeq nucleotide sequence ID" value="NM_001005226.2"/>
    <property type="RefSeq protein sequence ID" value="NP_001005226.1"/>
</dbReference>
<dbReference type="UCSC" id="uc003nlx.4">
    <property type="organism name" value="human"/>
</dbReference>
<dbReference type="AGR" id="HGNC:8238"/>
<dbReference type="CTD" id="442184"/>
<dbReference type="GeneCards" id="OR2B3"/>
<dbReference type="HGNC" id="HGNC:8238">
    <property type="gene designation" value="OR2B3"/>
</dbReference>
<dbReference type="HPA" id="ENSG00000204703">
    <property type="expression patterns" value="Not detected"/>
</dbReference>
<dbReference type="neXtProt" id="NX_O76000"/>
<dbReference type="VEuPathDB" id="HostDB:ENSG00000204703"/>
<dbReference type="eggNOG" id="ENOG502SI2C">
    <property type="taxonomic scope" value="Eukaryota"/>
</dbReference>
<dbReference type="GeneTree" id="ENSGT01130000278264"/>
<dbReference type="HOGENOM" id="CLU_012526_1_2_1"/>
<dbReference type="InParanoid" id="O76000"/>
<dbReference type="OMA" id="PHMLTNI"/>
<dbReference type="OrthoDB" id="5950740at2759"/>
<dbReference type="PAN-GO" id="O76000">
    <property type="GO annotations" value="0 GO annotations based on evolutionary models"/>
</dbReference>
<dbReference type="PhylomeDB" id="O76000"/>
<dbReference type="TreeFam" id="TF336512"/>
<dbReference type="PathwayCommons" id="O76000"/>
<dbReference type="Reactome" id="R-HSA-9752946">
    <property type="pathway name" value="Expression and translocation of olfactory receptors"/>
</dbReference>
<dbReference type="BioGRID-ORCS" id="442184">
    <property type="hits" value="6 hits in 738 CRISPR screens"/>
</dbReference>
<dbReference type="GeneWiki" id="OR2B3"/>
<dbReference type="GenomeRNAi" id="442184"/>
<dbReference type="Pharos" id="O76000">
    <property type="development level" value="Tdark"/>
</dbReference>
<dbReference type="PRO" id="PR:O76000"/>
<dbReference type="Proteomes" id="UP000005640">
    <property type="component" value="Chromosome 6"/>
</dbReference>
<dbReference type="RNAct" id="O76000">
    <property type="molecule type" value="protein"/>
</dbReference>
<dbReference type="Bgee" id="ENSG00000204703">
    <property type="expression patterns" value="Expressed in male germ line stem cell (sensu Vertebrata) in testis and 1 other cell type or tissue"/>
</dbReference>
<dbReference type="ExpressionAtlas" id="O76000">
    <property type="expression patterns" value="baseline and differential"/>
</dbReference>
<dbReference type="GO" id="GO:0005886">
    <property type="term" value="C:plasma membrane"/>
    <property type="evidence" value="ECO:0000318"/>
    <property type="project" value="GO_Central"/>
</dbReference>
<dbReference type="GO" id="GO:0004930">
    <property type="term" value="F:G protein-coupled receptor activity"/>
    <property type="evidence" value="ECO:0007669"/>
    <property type="project" value="UniProtKB-KW"/>
</dbReference>
<dbReference type="GO" id="GO:0004984">
    <property type="term" value="F:olfactory receptor activity"/>
    <property type="evidence" value="ECO:0000318"/>
    <property type="project" value="GO_Central"/>
</dbReference>
<dbReference type="GO" id="GO:0050911">
    <property type="term" value="P:detection of chemical stimulus involved in sensory perception of smell"/>
    <property type="evidence" value="ECO:0000318"/>
    <property type="project" value="GO_Central"/>
</dbReference>
<dbReference type="CDD" id="cd15947">
    <property type="entry name" value="7tmA_OR2B-like"/>
    <property type="match status" value="1"/>
</dbReference>
<dbReference type="FunFam" id="1.10.1220.70:FF:000001">
    <property type="entry name" value="Olfactory receptor"/>
    <property type="match status" value="1"/>
</dbReference>
<dbReference type="FunFam" id="1.20.1070.10:FF:000005">
    <property type="entry name" value="Olfactory receptor"/>
    <property type="match status" value="1"/>
</dbReference>
<dbReference type="Gene3D" id="1.20.1070.10">
    <property type="entry name" value="Rhodopsin 7-helix transmembrane proteins"/>
    <property type="match status" value="1"/>
</dbReference>
<dbReference type="InterPro" id="IPR000276">
    <property type="entry name" value="GPCR_Rhodpsn"/>
</dbReference>
<dbReference type="InterPro" id="IPR017452">
    <property type="entry name" value="GPCR_Rhodpsn_7TM"/>
</dbReference>
<dbReference type="InterPro" id="IPR000725">
    <property type="entry name" value="Olfact_rcpt"/>
</dbReference>
<dbReference type="PANTHER" id="PTHR26453">
    <property type="entry name" value="OLFACTORY RECEPTOR"/>
    <property type="match status" value="1"/>
</dbReference>
<dbReference type="Pfam" id="PF13853">
    <property type="entry name" value="7tm_4"/>
    <property type="match status" value="1"/>
</dbReference>
<dbReference type="PRINTS" id="PR00237">
    <property type="entry name" value="GPCRRHODOPSN"/>
</dbReference>
<dbReference type="PRINTS" id="PR00245">
    <property type="entry name" value="OLFACTORYR"/>
</dbReference>
<dbReference type="SUPFAM" id="SSF81321">
    <property type="entry name" value="Family A G protein-coupled receptor-like"/>
    <property type="match status" value="1"/>
</dbReference>
<dbReference type="PROSITE" id="PS00237">
    <property type="entry name" value="G_PROTEIN_RECEP_F1_1"/>
    <property type="match status" value="1"/>
</dbReference>
<dbReference type="PROSITE" id="PS50262">
    <property type="entry name" value="G_PROTEIN_RECEP_F1_2"/>
    <property type="match status" value="1"/>
</dbReference>
<reference key="1">
    <citation type="book" date="2000" name="Major histocompatibility complex-evolution, structure, and function">
        <title>Polymorphic olfactory receptor genes and HLA loci constitute extended haplotypes.</title>
        <editorList>
            <person name="Kasahara M."/>
        </editorList>
        <authorList>
            <person name="Ziegler A."/>
            <person name="Ehlers A."/>
            <person name="Forbes S.A."/>
            <person name="Trowsdale J."/>
            <person name="Uchanska-Ziegler B."/>
            <person name="Volz A."/>
            <person name="Younger R."/>
            <person name="Beck S."/>
        </authorList>
    </citation>
    <scope>NUCLEOTIDE SEQUENCE [GENOMIC DNA]</scope>
</reference>
<reference key="2">
    <citation type="journal article" date="2003" name="Nature">
        <title>The DNA sequence and analysis of human chromosome 6.</title>
        <authorList>
            <person name="Mungall A.J."/>
            <person name="Palmer S.A."/>
            <person name="Sims S.K."/>
            <person name="Edwards C.A."/>
            <person name="Ashurst J.L."/>
            <person name="Wilming L."/>
            <person name="Jones M.C."/>
            <person name="Horton R."/>
            <person name="Hunt S.E."/>
            <person name="Scott C.E."/>
            <person name="Gilbert J.G.R."/>
            <person name="Clamp M.E."/>
            <person name="Bethel G."/>
            <person name="Milne S."/>
            <person name="Ainscough R."/>
            <person name="Almeida J.P."/>
            <person name="Ambrose K.D."/>
            <person name="Andrews T.D."/>
            <person name="Ashwell R.I.S."/>
            <person name="Babbage A.K."/>
            <person name="Bagguley C.L."/>
            <person name="Bailey J."/>
            <person name="Banerjee R."/>
            <person name="Barker D.J."/>
            <person name="Barlow K.F."/>
            <person name="Bates K."/>
            <person name="Beare D.M."/>
            <person name="Beasley H."/>
            <person name="Beasley O."/>
            <person name="Bird C.P."/>
            <person name="Blakey S.E."/>
            <person name="Bray-Allen S."/>
            <person name="Brook J."/>
            <person name="Brown A.J."/>
            <person name="Brown J.Y."/>
            <person name="Burford D.C."/>
            <person name="Burrill W."/>
            <person name="Burton J."/>
            <person name="Carder C."/>
            <person name="Carter N.P."/>
            <person name="Chapman J.C."/>
            <person name="Clark S.Y."/>
            <person name="Clark G."/>
            <person name="Clee C.M."/>
            <person name="Clegg S."/>
            <person name="Cobley V."/>
            <person name="Collier R.E."/>
            <person name="Collins J.E."/>
            <person name="Colman L.K."/>
            <person name="Corby N.R."/>
            <person name="Coville G.J."/>
            <person name="Culley K.M."/>
            <person name="Dhami P."/>
            <person name="Davies J."/>
            <person name="Dunn M."/>
            <person name="Earthrowl M.E."/>
            <person name="Ellington A.E."/>
            <person name="Evans K.A."/>
            <person name="Faulkner L."/>
            <person name="Francis M.D."/>
            <person name="Frankish A."/>
            <person name="Frankland J."/>
            <person name="French L."/>
            <person name="Garner P."/>
            <person name="Garnett J."/>
            <person name="Ghori M.J."/>
            <person name="Gilby L.M."/>
            <person name="Gillson C.J."/>
            <person name="Glithero R.J."/>
            <person name="Grafham D.V."/>
            <person name="Grant M."/>
            <person name="Gribble S."/>
            <person name="Griffiths C."/>
            <person name="Griffiths M.N.D."/>
            <person name="Hall R."/>
            <person name="Halls K.S."/>
            <person name="Hammond S."/>
            <person name="Harley J.L."/>
            <person name="Hart E.A."/>
            <person name="Heath P.D."/>
            <person name="Heathcott R."/>
            <person name="Holmes S.J."/>
            <person name="Howden P.J."/>
            <person name="Howe K.L."/>
            <person name="Howell G.R."/>
            <person name="Huckle E."/>
            <person name="Humphray S.J."/>
            <person name="Humphries M.D."/>
            <person name="Hunt A.R."/>
            <person name="Johnson C.M."/>
            <person name="Joy A.A."/>
            <person name="Kay M."/>
            <person name="Keenan S.J."/>
            <person name="Kimberley A.M."/>
            <person name="King A."/>
            <person name="Laird G.K."/>
            <person name="Langford C."/>
            <person name="Lawlor S."/>
            <person name="Leongamornlert D.A."/>
            <person name="Leversha M."/>
            <person name="Lloyd C.R."/>
            <person name="Lloyd D.M."/>
            <person name="Loveland J.E."/>
            <person name="Lovell J."/>
            <person name="Martin S."/>
            <person name="Mashreghi-Mohammadi M."/>
            <person name="Maslen G.L."/>
            <person name="Matthews L."/>
            <person name="McCann O.T."/>
            <person name="McLaren S.J."/>
            <person name="McLay K."/>
            <person name="McMurray A."/>
            <person name="Moore M.J.F."/>
            <person name="Mullikin J.C."/>
            <person name="Niblett D."/>
            <person name="Nickerson T."/>
            <person name="Novik K.L."/>
            <person name="Oliver K."/>
            <person name="Overton-Larty E.K."/>
            <person name="Parker A."/>
            <person name="Patel R."/>
            <person name="Pearce A.V."/>
            <person name="Peck A.I."/>
            <person name="Phillimore B.J.C.T."/>
            <person name="Phillips S."/>
            <person name="Plumb R.W."/>
            <person name="Porter K.M."/>
            <person name="Ramsey Y."/>
            <person name="Ranby S.A."/>
            <person name="Rice C.M."/>
            <person name="Ross M.T."/>
            <person name="Searle S.M."/>
            <person name="Sehra H.K."/>
            <person name="Sheridan E."/>
            <person name="Skuce C.D."/>
            <person name="Smith S."/>
            <person name="Smith M."/>
            <person name="Spraggon L."/>
            <person name="Squares S.L."/>
            <person name="Steward C.A."/>
            <person name="Sycamore N."/>
            <person name="Tamlyn-Hall G."/>
            <person name="Tester J."/>
            <person name="Theaker A.J."/>
            <person name="Thomas D.W."/>
            <person name="Thorpe A."/>
            <person name="Tracey A."/>
            <person name="Tromans A."/>
            <person name="Tubby B."/>
            <person name="Wall M."/>
            <person name="Wallis J.M."/>
            <person name="West A.P."/>
            <person name="White S.S."/>
            <person name="Whitehead S.L."/>
            <person name="Whittaker H."/>
            <person name="Wild A."/>
            <person name="Willey D.J."/>
            <person name="Wilmer T.E."/>
            <person name="Wood J.M."/>
            <person name="Wray P.W."/>
            <person name="Wyatt J.C."/>
            <person name="Young L."/>
            <person name="Younger R.M."/>
            <person name="Bentley D.R."/>
            <person name="Coulson A."/>
            <person name="Durbin R.M."/>
            <person name="Hubbard T."/>
            <person name="Sulston J.E."/>
            <person name="Dunham I."/>
            <person name="Rogers J."/>
            <person name="Beck S."/>
        </authorList>
    </citation>
    <scope>NUCLEOTIDE SEQUENCE [LARGE SCALE GENOMIC DNA]</scope>
</reference>
<reference key="3">
    <citation type="submission" date="2005-07" db="EMBL/GenBank/DDBJ databases">
        <authorList>
            <person name="Mural R.J."/>
            <person name="Istrail S."/>
            <person name="Sutton G.G."/>
            <person name="Florea L."/>
            <person name="Halpern A.L."/>
            <person name="Mobarry C.M."/>
            <person name="Lippert R."/>
            <person name="Walenz B."/>
            <person name="Shatkay H."/>
            <person name="Dew I."/>
            <person name="Miller J.R."/>
            <person name="Flanigan M.J."/>
            <person name="Edwards N.J."/>
            <person name="Bolanos R."/>
            <person name="Fasulo D."/>
            <person name="Halldorsson B.V."/>
            <person name="Hannenhalli S."/>
            <person name="Turner R."/>
            <person name="Yooseph S."/>
            <person name="Lu F."/>
            <person name="Nusskern D.R."/>
            <person name="Shue B.C."/>
            <person name="Zheng X.H."/>
            <person name="Zhong F."/>
            <person name="Delcher A.L."/>
            <person name="Huson D.H."/>
            <person name="Kravitz S.A."/>
            <person name="Mouchard L."/>
            <person name="Reinert K."/>
            <person name="Remington K.A."/>
            <person name="Clark A.G."/>
            <person name="Waterman M.S."/>
            <person name="Eichler E.E."/>
            <person name="Adams M.D."/>
            <person name="Hunkapiller M.W."/>
            <person name="Myers E.W."/>
            <person name="Venter J.C."/>
        </authorList>
    </citation>
    <scope>NUCLEOTIDE SEQUENCE [LARGE SCALE GENOMIC DNA]</scope>
</reference>
<reference key="4">
    <citation type="journal article" date="2002" name="Genomics">
        <title>DEFOG: a practical scheme for deciphering families of genes.</title>
        <authorList>
            <person name="Fuchs T."/>
            <person name="Malecova B."/>
            <person name="Linhart C."/>
            <person name="Sharan R."/>
            <person name="Khen M."/>
            <person name="Herwig R."/>
            <person name="Shmulevich D."/>
            <person name="Elkon R."/>
            <person name="Steinfath M."/>
            <person name="O'Brien J.K."/>
            <person name="Radelof U."/>
            <person name="Lehrach H."/>
            <person name="Lancet D."/>
            <person name="Shamir R."/>
        </authorList>
    </citation>
    <scope>NUCLEOTIDE SEQUENCE [GENOMIC DNA] OF 68-283</scope>
</reference>
<reference key="5">
    <citation type="journal article" date="2004" name="Proc. Natl. Acad. Sci. U.S.A.">
        <title>The human olfactory receptor gene family.</title>
        <authorList>
            <person name="Malnic B."/>
            <person name="Godfrey P.A."/>
            <person name="Buck L.B."/>
        </authorList>
    </citation>
    <scope>IDENTIFICATION</scope>
</reference>
<reference key="6">
    <citation type="journal article" date="2004" name="Proc. Natl. Acad. Sci. U.S.A.">
        <authorList>
            <person name="Malnic B."/>
            <person name="Godfrey P.A."/>
            <person name="Buck L.B."/>
        </authorList>
    </citation>
    <scope>ERRATUM OF PUBMED:14983052</scope>
</reference>
<evidence type="ECO:0000255" key="1"/>
<evidence type="ECO:0000255" key="2">
    <source>
        <dbReference type="PROSITE-ProRule" id="PRU00521"/>
    </source>
</evidence>
<evidence type="ECO:0000305" key="3"/>
<protein>
    <recommendedName>
        <fullName>Putative olfactory receptor 2B3</fullName>
    </recommendedName>
    <alternativeName>
        <fullName>Hs6M1-1</fullName>
    </alternativeName>
    <alternativeName>
        <fullName>Olfactory receptor OR6-14</fullName>
        <shortName>OR6-4</shortName>
        <shortName>Olfactory receptor 6-4</shortName>
    </alternativeName>
</protein>
<organism>
    <name type="scientific">Homo sapiens</name>
    <name type="common">Human</name>
    <dbReference type="NCBI Taxonomy" id="9606"/>
    <lineage>
        <taxon>Eukaryota</taxon>
        <taxon>Metazoa</taxon>
        <taxon>Chordata</taxon>
        <taxon>Craniata</taxon>
        <taxon>Vertebrata</taxon>
        <taxon>Euteleostomi</taxon>
        <taxon>Mammalia</taxon>
        <taxon>Eutheria</taxon>
        <taxon>Euarchontoglires</taxon>
        <taxon>Primates</taxon>
        <taxon>Haplorrhini</taxon>
        <taxon>Catarrhini</taxon>
        <taxon>Hominidae</taxon>
        <taxon>Homo</taxon>
    </lineage>
</organism>
<gene>
    <name type="primary">OR2B3</name>
    <name type="synonym">OR2B3P</name>
</gene>
<sequence length="313" mass="35543">MNWENESSPKEFILLGFSDRAWLQMPLFVVLLISYTITIFGNVSIMMVCILDPKLHTPMYFFLTNLSILDLCYTTTTVPHMLVNIGCNKKTISYAGCVAHLIIFLALGATECLLLAVMSFDRYVAVCRPLHYVVIMNYWFCLRMAAFSWLIGFGNSVLQSSLTLNMPRCGHQEVDHFFCEVPALLKLSCADTKPIEAELFFFSVLILLIPVTLILISYGFIAQAVLKIRSAEGRQKAFGTCGSHMIVVSLFYGTAIYMYLQPPSSTSKDWGKMVSLFYGIITSMLNSLIYSLRNKDMKEAFKRLMPRIFFCKK</sequence>
<comment type="function">
    <text evidence="3">Odorant receptor.</text>
</comment>
<comment type="subcellular location">
    <subcellularLocation>
        <location>Cell membrane</location>
        <topology>Multi-pass membrane protein</topology>
    </subcellularLocation>
</comment>
<comment type="similarity">
    <text evidence="2">Belongs to the G-protein coupled receptor 1 family.</text>
</comment>
<comment type="online information" name="Human Olfactory Receptor Data Exploratorium (HORDE)">
    <link uri="http://genome.weizmann.ac.il/horde/card/index/symbol:OR2B3"/>
</comment>
<accession>O76000</accession>
<accession>B0UYQ1</accession>
<accession>Q5ST41</accession>
<accession>Q96R13</accession>